<keyword id="KW-0027">Amidation</keyword>
<keyword id="KW-0903">Direct protein sequencing</keyword>
<keyword id="KW-0527">Neuropeptide</keyword>
<keyword id="KW-0964">Secreted</keyword>
<protein>
    <recommendedName>
        <fullName evidence="5">Periviscerokinin-3</fullName>
        <shortName>Manre-PVK-3</shortName>
    </recommendedName>
</protein>
<dbReference type="GO" id="GO:0005576">
    <property type="term" value="C:extracellular region"/>
    <property type="evidence" value="ECO:0007669"/>
    <property type="project" value="UniProtKB-SubCell"/>
</dbReference>
<dbReference type="GO" id="GO:0007218">
    <property type="term" value="P:neuropeptide signaling pathway"/>
    <property type="evidence" value="ECO:0007669"/>
    <property type="project" value="UniProtKB-KW"/>
</dbReference>
<dbReference type="InterPro" id="IPR013231">
    <property type="entry name" value="Periviscerokinin"/>
</dbReference>
<dbReference type="Pfam" id="PF08259">
    <property type="entry name" value="Periviscerokin"/>
    <property type="match status" value="1"/>
</dbReference>
<evidence type="ECO:0000250" key="1">
    <source>
        <dbReference type="UniProtKB" id="P83923"/>
    </source>
</evidence>
<evidence type="ECO:0000250" key="2">
    <source>
        <dbReference type="UniProtKB" id="P84375"/>
    </source>
</evidence>
<evidence type="ECO:0000255" key="3"/>
<evidence type="ECO:0000269" key="4">
    <source>
    </source>
</evidence>
<evidence type="ECO:0000303" key="5">
    <source>
    </source>
</evidence>
<evidence type="ECO:0000305" key="6"/>
<feature type="peptide" id="PRO_0000395590" description="Periviscerokinin-3" evidence="4">
    <location>
        <begin position="1"/>
        <end position="16"/>
    </location>
</feature>
<feature type="modified residue" description="Leucine amide" evidence="4">
    <location>
        <position position="16"/>
    </location>
</feature>
<feature type="unsure residue" description="L or I" evidence="4">
    <location>
        <position position="10"/>
    </location>
</feature>
<feature type="unsure residue" description="I or L" evidence="4">
    <location>
        <position position="11"/>
    </location>
</feature>
<feature type="unsure residue" description="L or I" evidence="4">
    <location>
        <position position="16"/>
    </location>
</feature>
<proteinExistence type="evidence at protein level"/>
<accession>P86660</accession>
<reference evidence="6" key="1">
    <citation type="journal article" date="2010" name="Peptides">
        <title>CAPA-peptides of praying mantids (Mantodea).</title>
        <authorList>
            <person name="Koehler R."/>
            <person name="Predel R."/>
        </authorList>
    </citation>
    <scope>PROTEIN SEQUENCE</scope>
    <scope>MASS SPECTROMETRY</scope>
    <scope>AMIDATION AT LEU-16</scope>
    <source>
        <tissue evidence="4">Abdominal perisympathetic organs</tissue>
    </source>
</reference>
<comment type="function">
    <text evidence="1">Mediates visceral muscle contractile activity (myotropic activity).</text>
</comment>
<comment type="subcellular location">
    <subcellularLocation>
        <location evidence="2">Secreted</location>
    </subcellularLocation>
</comment>
<comment type="mass spectrometry" mass="1644.0" method="MALDI" evidence="4"/>
<comment type="similarity">
    <text evidence="3">Belongs to the periviscerokinin family.</text>
</comment>
<organism>
    <name type="scientific">Mantis religiosa</name>
    <name type="common">Praying mantis</name>
    <name type="synonym">Gryllus religiosa</name>
    <dbReference type="NCBI Taxonomy" id="7507"/>
    <lineage>
        <taxon>Eukaryota</taxon>
        <taxon>Metazoa</taxon>
        <taxon>Ecdysozoa</taxon>
        <taxon>Arthropoda</taxon>
        <taxon>Hexapoda</taxon>
        <taxon>Insecta</taxon>
        <taxon>Pterygota</taxon>
        <taxon>Neoptera</taxon>
        <taxon>Polyneoptera</taxon>
        <taxon>Dictyoptera</taxon>
        <taxon>Mantodea</taxon>
        <taxon>Eumantodea</taxon>
        <taxon>Mantoidea</taxon>
        <taxon>Mantidae</taxon>
        <taxon>Mantinae</taxon>
        <taxon>Mantini</taxon>
        <taxon>Mantis</taxon>
    </lineage>
</organism>
<name>PVK3_MANRE</name>
<sequence length="16" mass="1645">GKTKGVTSGLIAFPRL</sequence>